<protein>
    <recommendedName>
        <fullName evidence="1">Nucleoprotein</fullName>
    </recommendedName>
    <alternativeName>
        <fullName evidence="1">Nucleocapsid protein</fullName>
        <shortName evidence="1">Protein N</shortName>
    </alternativeName>
</protein>
<reference key="1">
    <citation type="journal article" date="1989" name="Virology">
        <title>Two subtypes of nucleoproteins (NP) of influenza A viruses.</title>
        <authorList>
            <person name="Gammelin M."/>
            <person name="Mandler J."/>
            <person name="Scholtissek C."/>
        </authorList>
    </citation>
    <scope>NUCLEOTIDE SEQUENCE [GENOMIC RNA]</scope>
</reference>
<sequence length="498" mass="56115">MASQGTKRSYEQMETDGERQNATEIRASVGKMINGIGRFYIQMCTELKLSDYEGRLIQNSLTIERMVLSAFDERRNKYLEEHPSAGKDPKKTGGPIYKRVDGKWMRELVLYDKEEMRRIWRQANNGDDATAGLTHLMIWHSNLNDTTYQRTRALVRTGMDPRMCSLMQGSTLPRRSGAAGAAVKGVGTMVMELIRMIKRGINDRNFWRGENGRKTRSAYERMCNILKGKFQTAAQRAMMDQVRESRNPGNAEIEDLIFLARSALILRGSVAHKSCLPACVYGPAVASGYDFEKEGYSLVGIDPFKLLQNSQVYSLIRPNENPAHKSQLVWMACNSAAFEDLRVLSFIRGTKVSPRGKLSTRGVQIASNENMDTMESSTLELRSRYWAIRTRSGGNTNQQRASAGQISVQPAFSVQRNLPFDKPTIMAAFTGNTEGRTSDMRTEIIRMMEGAKPEEMSFQGRGVFELSDEKATNPIVPSFDMSNEGSYFFGDNAEEYDN</sequence>
<evidence type="ECO:0000255" key="1">
    <source>
        <dbReference type="HAMAP-Rule" id="MF_04070"/>
    </source>
</evidence>
<evidence type="ECO:0000256" key="2">
    <source>
        <dbReference type="SAM" id="MobiDB-lite"/>
    </source>
</evidence>
<gene>
    <name evidence="1" type="primary">NP</name>
</gene>
<keyword id="KW-0167">Capsid protein</keyword>
<keyword id="KW-1139">Helical capsid protein</keyword>
<keyword id="KW-1048">Host nucleus</keyword>
<keyword id="KW-0945">Host-virus interaction</keyword>
<keyword id="KW-0687">Ribonucleoprotein</keyword>
<keyword id="KW-0694">RNA-binding</keyword>
<keyword id="KW-0543">Viral nucleoprotein</keyword>
<keyword id="KW-1163">Viral penetration into host nucleus</keyword>
<keyword id="KW-0946">Virion</keyword>
<keyword id="KW-1160">Virus entry into host cell</keyword>
<accession>P16986</accession>
<name>NCAP_I76AA</name>
<proteinExistence type="inferred from homology"/>
<organismHost>
    <name type="scientific">Aves</name>
    <dbReference type="NCBI Taxonomy" id="8782"/>
</organismHost>
<organismHost>
    <name type="scientific">Cetacea</name>
    <name type="common">whales</name>
    <dbReference type="NCBI Taxonomy" id="9721"/>
</organismHost>
<organismHost>
    <name type="scientific">Homo sapiens</name>
    <name type="common">Human</name>
    <dbReference type="NCBI Taxonomy" id="9606"/>
</organismHost>
<organismHost>
    <name type="scientific">Phocidae</name>
    <name type="common">true seals</name>
    <dbReference type="NCBI Taxonomy" id="9709"/>
</organismHost>
<organismHost>
    <name type="scientific">Sus scrofa</name>
    <name type="common">Pig</name>
    <dbReference type="NCBI Taxonomy" id="9823"/>
</organismHost>
<feature type="chain" id="PRO_0000079120" description="Nucleoprotein">
    <location>
        <begin position="1"/>
        <end position="498"/>
    </location>
</feature>
<feature type="region of interest" description="Disordered" evidence="2">
    <location>
        <begin position="1"/>
        <end position="21"/>
    </location>
</feature>
<feature type="short sequence motif" description="Unconventional nuclear localization signal" evidence="1">
    <location>
        <begin position="1"/>
        <end position="18"/>
    </location>
</feature>
<feature type="short sequence motif" description="Bipartite nuclear localization signal" evidence="1">
    <location>
        <begin position="198"/>
        <end position="216"/>
    </location>
</feature>
<feature type="compositionally biased region" description="Basic and acidic residues" evidence="2">
    <location>
        <begin position="8"/>
        <end position="21"/>
    </location>
</feature>
<comment type="function">
    <text evidence="1">Encapsidates the negative strand viral RNA, protecting it from nucleases. The encapsidated genomic RNA is termed the ribonucleoprotein (RNP) and serves as template for transcription and replication. The RNP needs to be localized in the host nucleus to start an infectious cycle, but is too large to diffuse through the nuclear pore complex. NP comprises at least 2 nuclear localization signals that are responsible for the active RNP import into the nucleus through cellular importin alpha/beta pathway. Later in the infection, nclear export of RNPs are mediated through viral proteins NEP interacting with M1 which binds nucleoproteins. It is possible that nucleoprotein binds directly host exportin-1/XPO1 and plays an active role in RNPs nuclear export. M1 interaction with RNP seems to hide nucleoprotein's nuclear localization signals. Soon after a virion infects a new cell, M1 dissociates from the RNP under acidification of the virion driven by M2 protein. Dissociation of M1 from RNP unmasks nucleoprotein's nuclear localization signals, targeting the RNP to the nucleus.</text>
</comment>
<comment type="subunit">
    <text evidence="1">Homomultimerizes to form the nucleocapsid. May bind host exportin-1/XPO1. Binds to viral genomic RNA. Protein-RNA contacts are mediated by a combination of electrostatic interactions between positively charged residues and the phosphate backbone and planar interactions between aromatic side chains and bases.</text>
</comment>
<comment type="subcellular location">
    <subcellularLocation>
        <location evidence="1">Virion</location>
    </subcellularLocation>
    <subcellularLocation>
        <location evidence="1">Host nucleus</location>
    </subcellularLocation>
</comment>
<comment type="PTM">
    <text evidence="1">Late in virus-infected cells, may be cleaved from a 56-kDa protein to a 53-kDa protein by a cellular caspase. This cleavage might be a marker for the onset of apoptosis in infected cells or have a specific function in virus host interaction.</text>
</comment>
<comment type="similarity">
    <text evidence="1">Belongs to the influenza viruses nucleoprotein family.</text>
</comment>
<organism>
    <name type="scientific">Influenza A virus (strain A/Swine/Hong Kong/6/1976 H3N2)</name>
    <dbReference type="NCBI Taxonomy" id="384485"/>
    <lineage>
        <taxon>Viruses</taxon>
        <taxon>Riboviria</taxon>
        <taxon>Orthornavirae</taxon>
        <taxon>Negarnaviricota</taxon>
        <taxon>Polyploviricotina</taxon>
        <taxon>Insthoviricetes</taxon>
        <taxon>Articulavirales</taxon>
        <taxon>Orthomyxoviridae</taxon>
        <taxon>Alphainfluenzavirus</taxon>
        <taxon>Alphainfluenzavirus influenzae</taxon>
        <taxon>Influenza A virus</taxon>
    </lineage>
</organism>
<dbReference type="EMBL" id="M22571">
    <property type="protein sequence ID" value="AAA43668.1"/>
    <property type="molecule type" value="Genomic_RNA"/>
</dbReference>
<dbReference type="SMR" id="P16986"/>
<dbReference type="GO" id="GO:0019029">
    <property type="term" value="C:helical viral capsid"/>
    <property type="evidence" value="ECO:0007669"/>
    <property type="project" value="UniProtKB-UniRule"/>
</dbReference>
<dbReference type="GO" id="GO:0043657">
    <property type="term" value="C:host cell"/>
    <property type="evidence" value="ECO:0007669"/>
    <property type="project" value="GOC"/>
</dbReference>
<dbReference type="GO" id="GO:0042025">
    <property type="term" value="C:host cell nucleus"/>
    <property type="evidence" value="ECO:0007669"/>
    <property type="project" value="UniProtKB-SubCell"/>
</dbReference>
<dbReference type="GO" id="GO:1990904">
    <property type="term" value="C:ribonucleoprotein complex"/>
    <property type="evidence" value="ECO:0007669"/>
    <property type="project" value="UniProtKB-KW"/>
</dbReference>
<dbReference type="GO" id="GO:0019013">
    <property type="term" value="C:viral nucleocapsid"/>
    <property type="evidence" value="ECO:0007669"/>
    <property type="project" value="UniProtKB-UniRule"/>
</dbReference>
<dbReference type="GO" id="GO:0003723">
    <property type="term" value="F:RNA binding"/>
    <property type="evidence" value="ECO:0007669"/>
    <property type="project" value="UniProtKB-UniRule"/>
</dbReference>
<dbReference type="GO" id="GO:0005198">
    <property type="term" value="F:structural molecule activity"/>
    <property type="evidence" value="ECO:0007669"/>
    <property type="project" value="UniProtKB-UniRule"/>
</dbReference>
<dbReference type="GO" id="GO:0046718">
    <property type="term" value="P:symbiont entry into host cell"/>
    <property type="evidence" value="ECO:0007669"/>
    <property type="project" value="UniProtKB-KW"/>
</dbReference>
<dbReference type="GO" id="GO:0075732">
    <property type="term" value="P:viral penetration into host nucleus"/>
    <property type="evidence" value="ECO:0007669"/>
    <property type="project" value="UniProtKB-UniRule"/>
</dbReference>
<dbReference type="HAMAP" id="MF_04070">
    <property type="entry name" value="INFV_NCAP"/>
    <property type="match status" value="1"/>
</dbReference>
<dbReference type="InterPro" id="IPR002141">
    <property type="entry name" value="Flu_NP"/>
</dbReference>
<dbReference type="Pfam" id="PF00506">
    <property type="entry name" value="Flu_NP"/>
    <property type="match status" value="1"/>
</dbReference>
<dbReference type="SUPFAM" id="SSF161003">
    <property type="entry name" value="flu NP-like"/>
    <property type="match status" value="1"/>
</dbReference>